<protein>
    <recommendedName>
        <fullName evidence="1">D-(-)-3-hydroxybutyrate oligomer hydrolase</fullName>
        <shortName evidence="1">3HB-oligomer hydrolase</shortName>
        <shortName evidence="1">3HBOH</shortName>
        <ecNumber evidence="1">3.1.1.22</ecNumber>
    </recommendedName>
</protein>
<name>HBOH_BURM7</name>
<sequence length="699" mass="71661">MTAIRGGSRRAPGLALALLGGVLLGACHGDENAQVNALPGFVSGSVRKTAYDGASDDLLTAGLGKTGLGSDTRPGFANPAQPSAAELRRLAIYSNYRALVDITPNGGYGRFWGPNVDLAGNDTLGEGKIAGTEYLAYSDDGSGRKNVTLLVQVPASFDPANPCIVTATASGSRGVYGAIAAAGEWGLKRGCAVAYNDKGGGNGAHEIGTGVVTLIDGTLATASSAGSSSLFTASESSSTLAAFNSAFPNRYAYKHAHSQQNPEQDWGLVTLQAVEFAYWALNEQFGPVVDGTRHGIRYRPGDITTIAASVSNGGGSALAAAEQDTRGWITAVVVGEPQINVRMTPGVTVEQGGAPVPSFGRPLADYATLANLLQPCAAAAVAATGAPYLSALPMGVTQSIRTQRCATLAAAGLVSGADTASQASDALAQLYAAGYLADSDLLQAPMWDSQAMPAIAVTYANAYTRSRVTDNLCNFSFATTNPVTGAVAAPAVSPMTNLFGAGNGVPPTNGINLVFNGASGGVDHRLATPDASFAGAFCLRQLWTANQLGIGTNVDAVRVAANLQHKPAIIVHGRSDALVPVNHASRAYVAQNSATEGRASQLSFYEVTNGQHFDAFLSVPGFDTRFVPVHYYDEQALNLMWNHLKSGAPLPPSQVIRTVPRGGVPGAAPALSTANLPPIVQSPGANAIAVNAGVIDVPL</sequence>
<accession>A3MME1</accession>
<proteinExistence type="inferred from homology"/>
<comment type="function">
    <text evidence="1">Participates in the degradation of poly-3-hydroxybutyrate (PHB). It works downstream of poly(3-hydroxybutyrate) depolymerase, hydrolyzing D(-)-3-hydroxybutyrate oligomers of various length (3HB-oligomers) into 3HB-monomers.</text>
</comment>
<comment type="catalytic activity">
    <reaction evidence="1">
        <text>(3R)-hydroxybutanoate dimer + H2O = 2 (R)-3-hydroxybutanoate + H(+)</text>
        <dbReference type="Rhea" id="RHEA:10172"/>
        <dbReference type="ChEBI" id="CHEBI:10979"/>
        <dbReference type="ChEBI" id="CHEBI:10983"/>
        <dbReference type="ChEBI" id="CHEBI:15377"/>
        <dbReference type="ChEBI" id="CHEBI:15378"/>
        <dbReference type="EC" id="3.1.1.22"/>
    </reaction>
</comment>
<comment type="pathway">
    <text evidence="1">Lipid metabolism; butanoate metabolism.</text>
</comment>
<comment type="subcellular location">
    <subcellularLocation>
        <location evidence="1">Secreted</location>
    </subcellularLocation>
</comment>
<comment type="similarity">
    <text evidence="1">Belongs to the D-(-)-3-hydroxybutyrate oligomer hydrolase family.</text>
</comment>
<evidence type="ECO:0000255" key="1">
    <source>
        <dbReference type="HAMAP-Rule" id="MF_01906"/>
    </source>
</evidence>
<dbReference type="EC" id="3.1.1.22" evidence="1"/>
<dbReference type="EMBL" id="CP000548">
    <property type="protein sequence ID" value="ABO06720.1"/>
    <property type="molecule type" value="Genomic_DNA"/>
</dbReference>
<dbReference type="RefSeq" id="WP_011832341.1">
    <property type="nucleotide sequence ID" value="NZ_CP007802.1"/>
</dbReference>
<dbReference type="ESTHER" id="burps-hboh">
    <property type="family name" value="OHBut_olig_hydro_put"/>
</dbReference>
<dbReference type="KEGG" id="bmaz:BM44_1320"/>
<dbReference type="KEGG" id="bmn:BMA10247_1890"/>
<dbReference type="PATRIC" id="fig|320389.8.peg.1473"/>
<dbReference type="UniPathway" id="UPA00863"/>
<dbReference type="GO" id="GO:0005615">
    <property type="term" value="C:extracellular space"/>
    <property type="evidence" value="ECO:0007669"/>
    <property type="project" value="InterPro"/>
</dbReference>
<dbReference type="GO" id="GO:0047989">
    <property type="term" value="F:hydroxybutyrate-dimer hydrolase activity"/>
    <property type="evidence" value="ECO:0007669"/>
    <property type="project" value="UniProtKB-UniRule"/>
</dbReference>
<dbReference type="GO" id="GO:0019605">
    <property type="term" value="P:butyrate metabolic process"/>
    <property type="evidence" value="ECO:0007669"/>
    <property type="project" value="UniProtKB-UniRule"/>
</dbReference>
<dbReference type="HAMAP" id="MF_01906">
    <property type="entry name" value="3HBOH"/>
    <property type="match status" value="1"/>
</dbReference>
<dbReference type="InterPro" id="IPR029058">
    <property type="entry name" value="AB_hydrolase_fold"/>
</dbReference>
<dbReference type="InterPro" id="IPR016582">
    <property type="entry name" value="OHBut_olig_hydro_put"/>
</dbReference>
<dbReference type="Pfam" id="PF10605">
    <property type="entry name" value="3HBOH"/>
    <property type="match status" value="1"/>
</dbReference>
<dbReference type="PIRSF" id="PIRSF011409">
    <property type="entry name" value="HObutyrate_olig_hydrol"/>
    <property type="match status" value="1"/>
</dbReference>
<dbReference type="SUPFAM" id="SSF53474">
    <property type="entry name" value="alpha/beta-Hydrolases"/>
    <property type="match status" value="1"/>
</dbReference>
<gene>
    <name type="ordered locus">BMA10247_1890</name>
</gene>
<keyword id="KW-0378">Hydrolase</keyword>
<keyword id="KW-0964">Secreted</keyword>
<keyword id="KW-0732">Signal</keyword>
<feature type="signal peptide" evidence="1">
    <location>
        <begin position="1"/>
        <end position="33"/>
    </location>
</feature>
<feature type="chain" id="PRO_0000314417" description="D-(-)-3-hydroxybutyrate oligomer hydrolase">
    <location>
        <begin position="34"/>
        <end position="699"/>
    </location>
</feature>
<feature type="active site" description="Charge relay system" evidence="1">
    <location>
        <position position="311"/>
    </location>
</feature>
<reference key="1">
    <citation type="journal article" date="2010" name="Genome Biol. Evol.">
        <title>Continuing evolution of Burkholderia mallei through genome reduction and large-scale rearrangements.</title>
        <authorList>
            <person name="Losada L."/>
            <person name="Ronning C.M."/>
            <person name="DeShazer D."/>
            <person name="Woods D."/>
            <person name="Fedorova N."/>
            <person name="Kim H.S."/>
            <person name="Shabalina S.A."/>
            <person name="Pearson T.R."/>
            <person name="Brinkac L."/>
            <person name="Tan P."/>
            <person name="Nandi T."/>
            <person name="Crabtree J."/>
            <person name="Badger J."/>
            <person name="Beckstrom-Sternberg S."/>
            <person name="Saqib M."/>
            <person name="Schutzer S.E."/>
            <person name="Keim P."/>
            <person name="Nierman W.C."/>
        </authorList>
    </citation>
    <scope>NUCLEOTIDE SEQUENCE [LARGE SCALE GENOMIC DNA]</scope>
    <source>
        <strain>NCTC 10247</strain>
    </source>
</reference>
<organism>
    <name type="scientific">Burkholderia mallei (strain NCTC 10247)</name>
    <dbReference type="NCBI Taxonomy" id="320389"/>
    <lineage>
        <taxon>Bacteria</taxon>
        <taxon>Pseudomonadati</taxon>
        <taxon>Pseudomonadota</taxon>
        <taxon>Betaproteobacteria</taxon>
        <taxon>Burkholderiales</taxon>
        <taxon>Burkholderiaceae</taxon>
        <taxon>Burkholderia</taxon>
        <taxon>pseudomallei group</taxon>
    </lineage>
</organism>